<protein>
    <recommendedName>
        <fullName evidence="1">dTTP/UTP pyrophosphatase</fullName>
        <shortName evidence="1">dTTPase/UTPase</shortName>
        <ecNumber evidence="1">3.6.1.9</ecNumber>
    </recommendedName>
    <alternativeName>
        <fullName evidence="1">Nucleoside triphosphate pyrophosphatase</fullName>
    </alternativeName>
    <alternativeName>
        <fullName evidence="1">Nucleotide pyrophosphatase</fullName>
        <shortName evidence="1">Nucleotide PPase</shortName>
    </alternativeName>
</protein>
<keyword id="KW-0963">Cytoplasm</keyword>
<keyword id="KW-0378">Hydrolase</keyword>
<keyword id="KW-0546">Nucleotide metabolism</keyword>
<keyword id="KW-1185">Reference proteome</keyword>
<proteinExistence type="inferred from homology"/>
<comment type="function">
    <text evidence="1">Nucleoside triphosphate pyrophosphatase that hydrolyzes dTTP and UTP. May have a dual role in cell division arrest and in preventing the incorporation of modified nucleotides into cellular nucleic acids.</text>
</comment>
<comment type="catalytic activity">
    <reaction evidence="1">
        <text>dTTP + H2O = dTMP + diphosphate + H(+)</text>
        <dbReference type="Rhea" id="RHEA:28534"/>
        <dbReference type="ChEBI" id="CHEBI:15377"/>
        <dbReference type="ChEBI" id="CHEBI:15378"/>
        <dbReference type="ChEBI" id="CHEBI:33019"/>
        <dbReference type="ChEBI" id="CHEBI:37568"/>
        <dbReference type="ChEBI" id="CHEBI:63528"/>
        <dbReference type="EC" id="3.6.1.9"/>
    </reaction>
</comment>
<comment type="catalytic activity">
    <reaction evidence="1">
        <text>UTP + H2O = UMP + diphosphate + H(+)</text>
        <dbReference type="Rhea" id="RHEA:29395"/>
        <dbReference type="ChEBI" id="CHEBI:15377"/>
        <dbReference type="ChEBI" id="CHEBI:15378"/>
        <dbReference type="ChEBI" id="CHEBI:33019"/>
        <dbReference type="ChEBI" id="CHEBI:46398"/>
        <dbReference type="ChEBI" id="CHEBI:57865"/>
        <dbReference type="EC" id="3.6.1.9"/>
    </reaction>
</comment>
<comment type="cofactor">
    <cofactor evidence="1">
        <name>a divalent metal cation</name>
        <dbReference type="ChEBI" id="CHEBI:60240"/>
    </cofactor>
</comment>
<comment type="subcellular location">
    <subcellularLocation>
        <location evidence="1">Cytoplasm</location>
    </subcellularLocation>
</comment>
<comment type="similarity">
    <text evidence="1">Belongs to the Maf family. YhdE subfamily.</text>
</comment>
<sequence length="193" mass="20423">MAAGPALVLASASPRRLDLLAQVGVTPDRVDPADIDETPLRDETPRRHALRLALEKARVVAARAPGDFVLAADTVVAVGRRILPKAETEADVLYCLKLLSGRNHKVLTGVALIAPDGRAATRLVETKVGFKRLSDAERDGYVASGQWRGKAGGYGVQGLAGGFITDLQGSYPSVVGLPLYETLNLLSGLGYRP</sequence>
<organism>
    <name type="scientific">Caulobacter vibrioides (strain ATCC 19089 / CIP 103742 / CB 15)</name>
    <name type="common">Caulobacter crescentus</name>
    <dbReference type="NCBI Taxonomy" id="190650"/>
    <lineage>
        <taxon>Bacteria</taxon>
        <taxon>Pseudomonadati</taxon>
        <taxon>Pseudomonadota</taxon>
        <taxon>Alphaproteobacteria</taxon>
        <taxon>Caulobacterales</taxon>
        <taxon>Caulobacteraceae</taxon>
        <taxon>Caulobacter</taxon>
    </lineage>
</organism>
<dbReference type="EC" id="3.6.1.9" evidence="1"/>
<dbReference type="EMBL" id="AE005673">
    <property type="protein sequence ID" value="AAK24313.1"/>
    <property type="molecule type" value="Genomic_DNA"/>
</dbReference>
<dbReference type="PIR" id="E87539">
    <property type="entry name" value="E87539"/>
</dbReference>
<dbReference type="RefSeq" id="NP_421145.1">
    <property type="nucleotide sequence ID" value="NC_002696.2"/>
</dbReference>
<dbReference type="SMR" id="Q9A5V5"/>
<dbReference type="STRING" id="190650.CC_2342"/>
<dbReference type="EnsemblBacteria" id="AAK24313">
    <property type="protein sequence ID" value="AAK24313"/>
    <property type="gene ID" value="CC_2342"/>
</dbReference>
<dbReference type="KEGG" id="ccr:CC_2342"/>
<dbReference type="PATRIC" id="fig|190650.5.peg.2363"/>
<dbReference type="eggNOG" id="COG0424">
    <property type="taxonomic scope" value="Bacteria"/>
</dbReference>
<dbReference type="HOGENOM" id="CLU_040416_2_0_5"/>
<dbReference type="BioCyc" id="CAULO:CC2342-MONOMER"/>
<dbReference type="Proteomes" id="UP000001816">
    <property type="component" value="Chromosome"/>
</dbReference>
<dbReference type="GO" id="GO:0005737">
    <property type="term" value="C:cytoplasm"/>
    <property type="evidence" value="ECO:0007669"/>
    <property type="project" value="UniProtKB-SubCell"/>
</dbReference>
<dbReference type="GO" id="GO:0036218">
    <property type="term" value="F:dTTP diphosphatase activity"/>
    <property type="evidence" value="ECO:0007669"/>
    <property type="project" value="RHEA"/>
</dbReference>
<dbReference type="GO" id="GO:0036221">
    <property type="term" value="F:UTP diphosphatase activity"/>
    <property type="evidence" value="ECO:0007669"/>
    <property type="project" value="RHEA"/>
</dbReference>
<dbReference type="GO" id="GO:0009117">
    <property type="term" value="P:nucleotide metabolic process"/>
    <property type="evidence" value="ECO:0007669"/>
    <property type="project" value="UniProtKB-KW"/>
</dbReference>
<dbReference type="CDD" id="cd00555">
    <property type="entry name" value="Maf"/>
    <property type="match status" value="1"/>
</dbReference>
<dbReference type="Gene3D" id="3.90.950.10">
    <property type="match status" value="1"/>
</dbReference>
<dbReference type="HAMAP" id="MF_00528">
    <property type="entry name" value="Maf"/>
    <property type="match status" value="1"/>
</dbReference>
<dbReference type="InterPro" id="IPR029001">
    <property type="entry name" value="ITPase-like_fam"/>
</dbReference>
<dbReference type="InterPro" id="IPR003697">
    <property type="entry name" value="Maf-like"/>
</dbReference>
<dbReference type="NCBIfam" id="TIGR00172">
    <property type="entry name" value="maf"/>
    <property type="match status" value="1"/>
</dbReference>
<dbReference type="PANTHER" id="PTHR43213">
    <property type="entry name" value="BIFUNCTIONAL DTTP/UTP PYROPHOSPHATASE/METHYLTRANSFERASE PROTEIN-RELATED"/>
    <property type="match status" value="1"/>
</dbReference>
<dbReference type="PANTHER" id="PTHR43213:SF5">
    <property type="entry name" value="BIFUNCTIONAL DTTP_UTP PYROPHOSPHATASE_METHYLTRANSFERASE PROTEIN-RELATED"/>
    <property type="match status" value="1"/>
</dbReference>
<dbReference type="Pfam" id="PF02545">
    <property type="entry name" value="Maf"/>
    <property type="match status" value="1"/>
</dbReference>
<dbReference type="PIRSF" id="PIRSF006305">
    <property type="entry name" value="Maf"/>
    <property type="match status" value="1"/>
</dbReference>
<dbReference type="SUPFAM" id="SSF52972">
    <property type="entry name" value="ITPase-like"/>
    <property type="match status" value="1"/>
</dbReference>
<gene>
    <name type="ordered locus">CC_2342</name>
</gene>
<name>NTPPA_CAUVC</name>
<accession>Q9A5V5</accession>
<feature type="chain" id="PRO_0000123006" description="dTTP/UTP pyrophosphatase">
    <location>
        <begin position="1"/>
        <end position="193"/>
    </location>
</feature>
<feature type="active site" description="Proton acceptor" evidence="1">
    <location>
        <position position="73"/>
    </location>
</feature>
<feature type="site" description="Important for substrate specificity" evidence="1">
    <location>
        <position position="15"/>
    </location>
</feature>
<feature type="site" description="Important for substrate specificity" evidence="1">
    <location>
        <position position="74"/>
    </location>
</feature>
<feature type="site" description="Important for substrate specificity" evidence="1">
    <location>
        <position position="157"/>
    </location>
</feature>
<evidence type="ECO:0000255" key="1">
    <source>
        <dbReference type="HAMAP-Rule" id="MF_00528"/>
    </source>
</evidence>
<reference key="1">
    <citation type="journal article" date="2001" name="Proc. Natl. Acad. Sci. U.S.A.">
        <title>Complete genome sequence of Caulobacter crescentus.</title>
        <authorList>
            <person name="Nierman W.C."/>
            <person name="Feldblyum T.V."/>
            <person name="Laub M.T."/>
            <person name="Paulsen I.T."/>
            <person name="Nelson K.E."/>
            <person name="Eisen J.A."/>
            <person name="Heidelberg J.F."/>
            <person name="Alley M.R.K."/>
            <person name="Ohta N."/>
            <person name="Maddock J.R."/>
            <person name="Potocka I."/>
            <person name="Nelson W.C."/>
            <person name="Newton A."/>
            <person name="Stephens C."/>
            <person name="Phadke N.D."/>
            <person name="Ely B."/>
            <person name="DeBoy R.T."/>
            <person name="Dodson R.J."/>
            <person name="Durkin A.S."/>
            <person name="Gwinn M.L."/>
            <person name="Haft D.H."/>
            <person name="Kolonay J.F."/>
            <person name="Smit J."/>
            <person name="Craven M.B."/>
            <person name="Khouri H.M."/>
            <person name="Shetty J."/>
            <person name="Berry K.J."/>
            <person name="Utterback T.R."/>
            <person name="Tran K."/>
            <person name="Wolf A.M."/>
            <person name="Vamathevan J.J."/>
            <person name="Ermolaeva M.D."/>
            <person name="White O."/>
            <person name="Salzberg S.L."/>
            <person name="Venter J.C."/>
            <person name="Shapiro L."/>
            <person name="Fraser C.M."/>
        </authorList>
    </citation>
    <scope>NUCLEOTIDE SEQUENCE [LARGE SCALE GENOMIC DNA]</scope>
    <source>
        <strain>ATCC 19089 / CIP 103742 / CB 15</strain>
    </source>
</reference>